<evidence type="ECO:0000255" key="1">
    <source>
        <dbReference type="HAMAP-Rule" id="MF_01445"/>
    </source>
</evidence>
<reference key="1">
    <citation type="journal article" date="2007" name="Genome Biol.">
        <title>Comparison of Francisella tularensis genomes reveals evolutionary events associated with the emergence of human pathogenic strains.</title>
        <authorList>
            <person name="Rohmer L."/>
            <person name="Fong C."/>
            <person name="Abmayr S."/>
            <person name="Wasnick M."/>
            <person name="Larson Freeman T.J."/>
            <person name="Radey M."/>
            <person name="Guina T."/>
            <person name="Svensson K."/>
            <person name="Hayden H.S."/>
            <person name="Jacobs M."/>
            <person name="Gallagher L.A."/>
            <person name="Manoil C."/>
            <person name="Ernst R.K."/>
            <person name="Drees B."/>
            <person name="Buckley D."/>
            <person name="Haugen E."/>
            <person name="Bovee D."/>
            <person name="Zhou Y."/>
            <person name="Chang J."/>
            <person name="Levy R."/>
            <person name="Lim R."/>
            <person name="Gillett W."/>
            <person name="Guenthener D."/>
            <person name="Kang A."/>
            <person name="Shaffer S.A."/>
            <person name="Taylor G."/>
            <person name="Chen J."/>
            <person name="Gallis B."/>
            <person name="D'Argenio D.A."/>
            <person name="Forsman M."/>
            <person name="Olson M.V."/>
            <person name="Goodlett D.R."/>
            <person name="Kaul R."/>
            <person name="Miller S.I."/>
            <person name="Brittnacher M.J."/>
        </authorList>
    </citation>
    <scope>NUCLEOTIDE SEQUENCE [LARGE SCALE GENOMIC DNA]</scope>
    <source>
        <strain>U112</strain>
    </source>
</reference>
<sequence>MIVLGIESSCDETGLAIYDYSKKKLIADELYSQVKLHKKYGGVVPELASREHIAKLNLLAKKIFKETGLSFEDIDCIAYTAMPGLVGALMVGATFAKTLGLIHNIDTIAVHHLEGHLLSPLLDHNSNIEYPFVALLVSGGHTQLFEVKEFGEYSLLGESIDDAAGEAFDKTAKLLGMGYPGGVEVANLADQATDKSKYILPRPMKNKPNLDFSFSGLKTAVLNTWYDEQDQSLENKANLCYAFQDAAIDVLVSKCAKALQKTKNTRLVISGGVSANKLLRHQLDLLAKNRGYQIFFPPMKYCTDNGAMIAQAGAYRYVNGFKDSNLEINVKARSPL</sequence>
<protein>
    <recommendedName>
        <fullName evidence="1">tRNA N6-adenosine threonylcarbamoyltransferase</fullName>
        <ecNumber evidence="1">2.3.1.234</ecNumber>
    </recommendedName>
    <alternativeName>
        <fullName evidence="1">N6-L-threonylcarbamoyladenine synthase</fullName>
        <shortName evidence="1">t(6)A synthase</shortName>
    </alternativeName>
    <alternativeName>
        <fullName evidence="1">t(6)A37 threonylcarbamoyladenosine biosynthesis protein TsaD</fullName>
    </alternativeName>
    <alternativeName>
        <fullName evidence="1">tRNA threonylcarbamoyladenosine biosynthesis protein TsaD</fullName>
    </alternativeName>
</protein>
<keyword id="KW-0012">Acyltransferase</keyword>
<keyword id="KW-0963">Cytoplasm</keyword>
<keyword id="KW-0408">Iron</keyword>
<keyword id="KW-0479">Metal-binding</keyword>
<keyword id="KW-0808">Transferase</keyword>
<keyword id="KW-0819">tRNA processing</keyword>
<feature type="chain" id="PRO_0000303365" description="tRNA N6-adenosine threonylcarbamoyltransferase">
    <location>
        <begin position="1"/>
        <end position="336"/>
    </location>
</feature>
<feature type="binding site" evidence="1">
    <location>
        <position position="112"/>
    </location>
    <ligand>
        <name>Fe cation</name>
        <dbReference type="ChEBI" id="CHEBI:24875"/>
    </ligand>
</feature>
<feature type="binding site" evidence="1">
    <location>
        <position position="116"/>
    </location>
    <ligand>
        <name>Fe cation</name>
        <dbReference type="ChEBI" id="CHEBI:24875"/>
    </ligand>
</feature>
<feature type="binding site" evidence="1">
    <location>
        <begin position="136"/>
        <end position="140"/>
    </location>
    <ligand>
        <name>substrate</name>
    </ligand>
</feature>
<feature type="binding site" evidence="1">
    <location>
        <position position="169"/>
    </location>
    <ligand>
        <name>substrate</name>
    </ligand>
</feature>
<feature type="binding site" evidence="1">
    <location>
        <position position="182"/>
    </location>
    <ligand>
        <name>substrate</name>
    </ligand>
</feature>
<feature type="binding site" evidence="1">
    <location>
        <position position="276"/>
    </location>
    <ligand>
        <name>substrate</name>
    </ligand>
</feature>
<feature type="binding site" evidence="1">
    <location>
        <position position="304"/>
    </location>
    <ligand>
        <name>Fe cation</name>
        <dbReference type="ChEBI" id="CHEBI:24875"/>
    </ligand>
</feature>
<proteinExistence type="inferred from homology"/>
<dbReference type="EC" id="2.3.1.234" evidence="1"/>
<dbReference type="EMBL" id="CP000439">
    <property type="protein sequence ID" value="ABK90429.1"/>
    <property type="molecule type" value="Genomic_DNA"/>
</dbReference>
<dbReference type="RefSeq" id="WP_003040632.1">
    <property type="nucleotide sequence ID" value="NC_008601.1"/>
</dbReference>
<dbReference type="SMR" id="A0Q864"/>
<dbReference type="KEGG" id="ftn:FTN_1565"/>
<dbReference type="KEGG" id="ftx:AW25_433"/>
<dbReference type="BioCyc" id="FTUL401614:G1G75-1617-MONOMER"/>
<dbReference type="Proteomes" id="UP000000762">
    <property type="component" value="Chromosome"/>
</dbReference>
<dbReference type="GO" id="GO:0005737">
    <property type="term" value="C:cytoplasm"/>
    <property type="evidence" value="ECO:0007669"/>
    <property type="project" value="UniProtKB-SubCell"/>
</dbReference>
<dbReference type="GO" id="GO:0005506">
    <property type="term" value="F:iron ion binding"/>
    <property type="evidence" value="ECO:0007669"/>
    <property type="project" value="UniProtKB-UniRule"/>
</dbReference>
<dbReference type="GO" id="GO:0061711">
    <property type="term" value="F:N(6)-L-threonylcarbamoyladenine synthase activity"/>
    <property type="evidence" value="ECO:0007669"/>
    <property type="project" value="UniProtKB-EC"/>
</dbReference>
<dbReference type="GO" id="GO:0002949">
    <property type="term" value="P:tRNA threonylcarbamoyladenosine modification"/>
    <property type="evidence" value="ECO:0007669"/>
    <property type="project" value="UniProtKB-UniRule"/>
</dbReference>
<dbReference type="CDD" id="cd24133">
    <property type="entry name" value="ASKHA_NBD_TsaD_bac"/>
    <property type="match status" value="1"/>
</dbReference>
<dbReference type="FunFam" id="3.30.420.40:FF:000012">
    <property type="entry name" value="tRNA N6-adenosine threonylcarbamoyltransferase"/>
    <property type="match status" value="1"/>
</dbReference>
<dbReference type="FunFam" id="3.30.420.40:FF:000040">
    <property type="entry name" value="tRNA N6-adenosine threonylcarbamoyltransferase"/>
    <property type="match status" value="1"/>
</dbReference>
<dbReference type="Gene3D" id="3.30.420.40">
    <property type="match status" value="2"/>
</dbReference>
<dbReference type="HAMAP" id="MF_01445">
    <property type="entry name" value="TsaD"/>
    <property type="match status" value="1"/>
</dbReference>
<dbReference type="InterPro" id="IPR043129">
    <property type="entry name" value="ATPase_NBD"/>
</dbReference>
<dbReference type="InterPro" id="IPR000905">
    <property type="entry name" value="Gcp-like_dom"/>
</dbReference>
<dbReference type="InterPro" id="IPR017861">
    <property type="entry name" value="KAE1/TsaD"/>
</dbReference>
<dbReference type="InterPro" id="IPR022450">
    <property type="entry name" value="TsaD"/>
</dbReference>
<dbReference type="NCBIfam" id="TIGR00329">
    <property type="entry name" value="gcp_kae1"/>
    <property type="match status" value="1"/>
</dbReference>
<dbReference type="NCBIfam" id="TIGR03723">
    <property type="entry name" value="T6A_TsaD_YgjD"/>
    <property type="match status" value="1"/>
</dbReference>
<dbReference type="PANTHER" id="PTHR11735">
    <property type="entry name" value="TRNA N6-ADENOSINE THREONYLCARBAMOYLTRANSFERASE"/>
    <property type="match status" value="1"/>
</dbReference>
<dbReference type="PANTHER" id="PTHR11735:SF6">
    <property type="entry name" value="TRNA N6-ADENOSINE THREONYLCARBAMOYLTRANSFERASE, MITOCHONDRIAL"/>
    <property type="match status" value="1"/>
</dbReference>
<dbReference type="Pfam" id="PF00814">
    <property type="entry name" value="TsaD"/>
    <property type="match status" value="1"/>
</dbReference>
<dbReference type="PRINTS" id="PR00789">
    <property type="entry name" value="OSIALOPTASE"/>
</dbReference>
<dbReference type="SUPFAM" id="SSF53067">
    <property type="entry name" value="Actin-like ATPase domain"/>
    <property type="match status" value="2"/>
</dbReference>
<organism>
    <name type="scientific">Francisella tularensis subsp. novicida (strain U112)</name>
    <dbReference type="NCBI Taxonomy" id="401614"/>
    <lineage>
        <taxon>Bacteria</taxon>
        <taxon>Pseudomonadati</taxon>
        <taxon>Pseudomonadota</taxon>
        <taxon>Gammaproteobacteria</taxon>
        <taxon>Thiotrichales</taxon>
        <taxon>Francisellaceae</taxon>
        <taxon>Francisella</taxon>
    </lineage>
</organism>
<accession>A0Q864</accession>
<name>TSAD_FRATN</name>
<comment type="function">
    <text evidence="1">Required for the formation of a threonylcarbamoyl group on adenosine at position 37 (t(6)A37) in tRNAs that read codons beginning with adenine. Is involved in the transfer of the threonylcarbamoyl moiety of threonylcarbamoyl-AMP (TC-AMP) to the N6 group of A37, together with TsaE and TsaB. TsaD likely plays a direct catalytic role in this reaction.</text>
</comment>
<comment type="catalytic activity">
    <reaction evidence="1">
        <text>L-threonylcarbamoyladenylate + adenosine(37) in tRNA = N(6)-L-threonylcarbamoyladenosine(37) in tRNA + AMP + H(+)</text>
        <dbReference type="Rhea" id="RHEA:37059"/>
        <dbReference type="Rhea" id="RHEA-COMP:10162"/>
        <dbReference type="Rhea" id="RHEA-COMP:10163"/>
        <dbReference type="ChEBI" id="CHEBI:15378"/>
        <dbReference type="ChEBI" id="CHEBI:73682"/>
        <dbReference type="ChEBI" id="CHEBI:74411"/>
        <dbReference type="ChEBI" id="CHEBI:74418"/>
        <dbReference type="ChEBI" id="CHEBI:456215"/>
        <dbReference type="EC" id="2.3.1.234"/>
    </reaction>
</comment>
<comment type="cofactor">
    <cofactor evidence="1">
        <name>Fe(2+)</name>
        <dbReference type="ChEBI" id="CHEBI:29033"/>
    </cofactor>
    <text evidence="1">Binds 1 Fe(2+) ion per subunit.</text>
</comment>
<comment type="subcellular location">
    <subcellularLocation>
        <location evidence="1">Cytoplasm</location>
    </subcellularLocation>
</comment>
<comment type="similarity">
    <text evidence="1">Belongs to the KAE1 / TsaD family.</text>
</comment>
<gene>
    <name evidence="1" type="primary">tsaD</name>
    <name type="synonym">gcp</name>
    <name type="ordered locus">FTN_1565</name>
</gene>